<feature type="chain" id="PRO_0000328221" description="DNA-directed RNA polymerases I, II, and III subunit rpabc3">
    <location>
        <begin position="1"/>
        <end position="142"/>
    </location>
</feature>
<feature type="region of interest" description="Non-specific ssDNA binding" evidence="1">
    <location>
        <begin position="16"/>
        <end position="40"/>
    </location>
</feature>
<name>RPAB3_DICDI</name>
<sequence length="142" mass="16177">MTSILFEDTFEVKEIDPDGKKFDRVSRFVCYSENYEMDLQIDIATHIYPLGHERFKMVLASSLNLDGSSDNSGSYDTNKPSLADKYDYVMYGKIFKYQKENSSSKVSVFASFGGLLVLLQGDPRYLPGIELDARIYLLIKKA</sequence>
<evidence type="ECO:0000250" key="1"/>
<evidence type="ECO:0000305" key="2"/>
<reference key="1">
    <citation type="journal article" date="2005" name="Nature">
        <title>The genome of the social amoeba Dictyostelium discoideum.</title>
        <authorList>
            <person name="Eichinger L."/>
            <person name="Pachebat J.A."/>
            <person name="Gloeckner G."/>
            <person name="Rajandream M.A."/>
            <person name="Sucgang R."/>
            <person name="Berriman M."/>
            <person name="Song J."/>
            <person name="Olsen R."/>
            <person name="Szafranski K."/>
            <person name="Xu Q."/>
            <person name="Tunggal B."/>
            <person name="Kummerfeld S."/>
            <person name="Madera M."/>
            <person name="Konfortov B.A."/>
            <person name="Rivero F."/>
            <person name="Bankier A.T."/>
            <person name="Lehmann R."/>
            <person name="Hamlin N."/>
            <person name="Davies R."/>
            <person name="Gaudet P."/>
            <person name="Fey P."/>
            <person name="Pilcher K."/>
            <person name="Chen G."/>
            <person name="Saunders D."/>
            <person name="Sodergren E.J."/>
            <person name="Davis P."/>
            <person name="Kerhornou A."/>
            <person name="Nie X."/>
            <person name="Hall N."/>
            <person name="Anjard C."/>
            <person name="Hemphill L."/>
            <person name="Bason N."/>
            <person name="Farbrother P."/>
            <person name="Desany B."/>
            <person name="Just E."/>
            <person name="Morio T."/>
            <person name="Rost R."/>
            <person name="Churcher C.M."/>
            <person name="Cooper J."/>
            <person name="Haydock S."/>
            <person name="van Driessche N."/>
            <person name="Cronin A."/>
            <person name="Goodhead I."/>
            <person name="Muzny D.M."/>
            <person name="Mourier T."/>
            <person name="Pain A."/>
            <person name="Lu M."/>
            <person name="Harper D."/>
            <person name="Lindsay R."/>
            <person name="Hauser H."/>
            <person name="James K.D."/>
            <person name="Quiles M."/>
            <person name="Madan Babu M."/>
            <person name="Saito T."/>
            <person name="Buchrieser C."/>
            <person name="Wardroper A."/>
            <person name="Felder M."/>
            <person name="Thangavelu M."/>
            <person name="Johnson D."/>
            <person name="Knights A."/>
            <person name="Loulseged H."/>
            <person name="Mungall K.L."/>
            <person name="Oliver K."/>
            <person name="Price C."/>
            <person name="Quail M.A."/>
            <person name="Urushihara H."/>
            <person name="Hernandez J."/>
            <person name="Rabbinowitsch E."/>
            <person name="Steffen D."/>
            <person name="Sanders M."/>
            <person name="Ma J."/>
            <person name="Kohara Y."/>
            <person name="Sharp S."/>
            <person name="Simmonds M.N."/>
            <person name="Spiegler S."/>
            <person name="Tivey A."/>
            <person name="Sugano S."/>
            <person name="White B."/>
            <person name="Walker D."/>
            <person name="Woodward J.R."/>
            <person name="Winckler T."/>
            <person name="Tanaka Y."/>
            <person name="Shaulsky G."/>
            <person name="Schleicher M."/>
            <person name="Weinstock G.M."/>
            <person name="Rosenthal A."/>
            <person name="Cox E.C."/>
            <person name="Chisholm R.L."/>
            <person name="Gibbs R.A."/>
            <person name="Loomis W.F."/>
            <person name="Platzer M."/>
            <person name="Kay R.R."/>
            <person name="Williams J.G."/>
            <person name="Dear P.H."/>
            <person name="Noegel A.A."/>
            <person name="Barrell B.G."/>
            <person name="Kuspa A."/>
        </authorList>
    </citation>
    <scope>NUCLEOTIDE SEQUENCE [LARGE SCALE GENOMIC DNA]</scope>
    <source>
        <strain>AX4</strain>
    </source>
</reference>
<proteinExistence type="inferred from homology"/>
<keyword id="KW-0238">DNA-binding</keyword>
<keyword id="KW-0240">DNA-directed RNA polymerase</keyword>
<keyword id="KW-0539">Nucleus</keyword>
<keyword id="KW-1185">Reference proteome</keyword>
<keyword id="KW-0804">Transcription</keyword>
<gene>
    <name type="primary">polr2h</name>
    <name type="synonym">rpb8</name>
    <name type="ORF">DDB_G0278039</name>
</gene>
<protein>
    <recommendedName>
        <fullName>DNA-directed RNA polymerases I, II, and III subunit rpabc3</fullName>
        <shortName>RNA polymerases I, II, and III subunit ABC3</shortName>
    </recommendedName>
    <alternativeName>
        <fullName>RNA polymerase B subunit 8</fullName>
        <shortName>RPB8</shortName>
    </alternativeName>
    <alternativeName>
        <fullName>RPB17</fullName>
    </alternativeName>
</protein>
<accession>Q54YW8</accession>
<comment type="function">
    <text evidence="1">DNA-dependent RNA polymerase catalyzes the transcription of DNA into RNA using the four ribonucleoside triphosphates as substrates. Common component of RNA polymerases I, II and III which synthesize ribosomal RNA precursors, mRNA precursors and many functional non-coding RNAs, and small RNAs, such as 5S rRNA and tRNAs, respectively (By similarity).</text>
</comment>
<comment type="subunit">
    <text evidence="1">Component of the RNA polymerase I (Pol I), RNA polymerase II (Pol II) and RNA polymerase III (Pol III) complexes consisting of at least 13, 12 and 17 subunits, respectively. Directly interacts with POLR2A (By similarity).</text>
</comment>
<comment type="subcellular location">
    <subcellularLocation>
        <location evidence="1">Nucleus</location>
        <location evidence="1">Nucleolus</location>
    </subcellularLocation>
</comment>
<comment type="similarity">
    <text evidence="2">Belongs to the eukaryotic RPB8 RNA polymerase subunit family.</text>
</comment>
<dbReference type="EMBL" id="AAFI02000023">
    <property type="protein sequence ID" value="EAL68192.1"/>
    <property type="molecule type" value="Genomic_DNA"/>
</dbReference>
<dbReference type="RefSeq" id="XP_642084.1">
    <property type="nucleotide sequence ID" value="XM_636992.1"/>
</dbReference>
<dbReference type="SMR" id="Q54YW8"/>
<dbReference type="FunCoup" id="Q54YW8">
    <property type="interactions" value="805"/>
</dbReference>
<dbReference type="STRING" id="44689.Q54YW8"/>
<dbReference type="PaxDb" id="44689-DDB0216297"/>
<dbReference type="EnsemblProtists" id="EAL68192">
    <property type="protein sequence ID" value="EAL68192"/>
    <property type="gene ID" value="DDB_G0278039"/>
</dbReference>
<dbReference type="GeneID" id="8621297"/>
<dbReference type="KEGG" id="ddi:DDB_G0278039"/>
<dbReference type="dictyBase" id="DDB_G0278039">
    <property type="gene designation" value="rpb8"/>
</dbReference>
<dbReference type="VEuPathDB" id="AmoebaDB:DDB_G0278039"/>
<dbReference type="eggNOG" id="KOG3400">
    <property type="taxonomic scope" value="Eukaryota"/>
</dbReference>
<dbReference type="HOGENOM" id="CLU_103864_1_1_1"/>
<dbReference type="InParanoid" id="Q54YW8"/>
<dbReference type="OMA" id="KEDDKGW"/>
<dbReference type="PhylomeDB" id="Q54YW8"/>
<dbReference type="Reactome" id="R-DDI-113418">
    <property type="pathway name" value="Formation of the Early Elongation Complex"/>
</dbReference>
<dbReference type="Reactome" id="R-DDI-674695">
    <property type="pathway name" value="RNA Polymerase II Pre-transcription Events"/>
</dbReference>
<dbReference type="Reactome" id="R-DDI-6781823">
    <property type="pathway name" value="Formation of TC-NER Pre-Incision Complex"/>
</dbReference>
<dbReference type="Reactome" id="R-DDI-6782135">
    <property type="pathway name" value="Dual incision in TC-NER"/>
</dbReference>
<dbReference type="Reactome" id="R-DDI-6782210">
    <property type="pathway name" value="Gap-filling DNA repair synthesis and ligation in TC-NER"/>
</dbReference>
<dbReference type="Reactome" id="R-DDI-6796648">
    <property type="pathway name" value="TP53 Regulates Transcription of DNA Repair Genes"/>
</dbReference>
<dbReference type="Reactome" id="R-DDI-6807505">
    <property type="pathway name" value="RNA polymerase II transcribes snRNA genes"/>
</dbReference>
<dbReference type="Reactome" id="R-DDI-72086">
    <property type="pathway name" value="mRNA Capping"/>
</dbReference>
<dbReference type="Reactome" id="R-DDI-72163">
    <property type="pathway name" value="mRNA Splicing - Major Pathway"/>
</dbReference>
<dbReference type="Reactome" id="R-DDI-72203">
    <property type="pathway name" value="Processing of Capped Intron-Containing Pre-mRNA"/>
</dbReference>
<dbReference type="Reactome" id="R-DDI-73762">
    <property type="pathway name" value="RNA Polymerase I Transcription Initiation"/>
</dbReference>
<dbReference type="Reactome" id="R-DDI-73772">
    <property type="pathway name" value="RNA Polymerase I Promoter Escape"/>
</dbReference>
<dbReference type="Reactome" id="R-DDI-73776">
    <property type="pathway name" value="RNA Polymerase II Promoter Escape"/>
</dbReference>
<dbReference type="Reactome" id="R-DDI-73779">
    <property type="pathway name" value="RNA Polymerase II Transcription Pre-Initiation And Promoter Opening"/>
</dbReference>
<dbReference type="Reactome" id="R-DDI-75953">
    <property type="pathway name" value="RNA Polymerase II Transcription Initiation"/>
</dbReference>
<dbReference type="Reactome" id="R-DDI-76042">
    <property type="pathway name" value="RNA Polymerase II Transcription Initiation And Promoter Clearance"/>
</dbReference>
<dbReference type="Reactome" id="R-DDI-76061">
    <property type="pathway name" value="RNA Polymerase III Transcription Initiation From Type 1 Promoter"/>
</dbReference>
<dbReference type="Reactome" id="R-DDI-76066">
    <property type="pathway name" value="RNA Polymerase III Transcription Initiation From Type 2 Promoter"/>
</dbReference>
<dbReference type="Reactome" id="R-DDI-77075">
    <property type="pathway name" value="RNA Pol II CTD phosphorylation and interaction with CE"/>
</dbReference>
<dbReference type="Reactome" id="R-DDI-9018519">
    <property type="pathway name" value="Estrogen-dependent gene expression"/>
</dbReference>
<dbReference type="PRO" id="PR:Q54YW8"/>
<dbReference type="Proteomes" id="UP000002195">
    <property type="component" value="Chromosome 3"/>
</dbReference>
<dbReference type="GO" id="GO:0005736">
    <property type="term" value="C:RNA polymerase I complex"/>
    <property type="evidence" value="ECO:0000250"/>
    <property type="project" value="dictyBase"/>
</dbReference>
<dbReference type="GO" id="GO:0005665">
    <property type="term" value="C:RNA polymerase II, core complex"/>
    <property type="evidence" value="ECO:0000250"/>
    <property type="project" value="dictyBase"/>
</dbReference>
<dbReference type="GO" id="GO:0005666">
    <property type="term" value="C:RNA polymerase III complex"/>
    <property type="evidence" value="ECO:0000250"/>
    <property type="project" value="dictyBase"/>
</dbReference>
<dbReference type="GO" id="GO:0003677">
    <property type="term" value="F:DNA binding"/>
    <property type="evidence" value="ECO:0007669"/>
    <property type="project" value="UniProtKB-KW"/>
</dbReference>
<dbReference type="GO" id="GO:0003899">
    <property type="term" value="F:DNA-directed RNA polymerase activity"/>
    <property type="evidence" value="ECO:0000250"/>
    <property type="project" value="dictyBase"/>
</dbReference>
<dbReference type="GO" id="GO:0006360">
    <property type="term" value="P:transcription by RNA polymerase I"/>
    <property type="evidence" value="ECO:0000250"/>
    <property type="project" value="dictyBase"/>
</dbReference>
<dbReference type="GO" id="GO:0006366">
    <property type="term" value="P:transcription by RNA polymerase II"/>
    <property type="evidence" value="ECO:0000250"/>
    <property type="project" value="dictyBase"/>
</dbReference>
<dbReference type="GO" id="GO:0006383">
    <property type="term" value="P:transcription by RNA polymerase III"/>
    <property type="evidence" value="ECO:0000250"/>
    <property type="project" value="dictyBase"/>
</dbReference>
<dbReference type="FunFam" id="2.40.50.140:FF:000073">
    <property type="entry name" value="DNA-directed RNA polymerases I, II, and III subunit RPABC3"/>
    <property type="match status" value="1"/>
</dbReference>
<dbReference type="Gene3D" id="2.40.50.140">
    <property type="entry name" value="Nucleic acid-binding proteins"/>
    <property type="match status" value="1"/>
</dbReference>
<dbReference type="InterPro" id="IPR012340">
    <property type="entry name" value="NA-bd_OB-fold"/>
</dbReference>
<dbReference type="InterPro" id="IPR005570">
    <property type="entry name" value="RPABC3"/>
</dbReference>
<dbReference type="PANTHER" id="PTHR10917">
    <property type="entry name" value="DNA-DIRECTED RNA POLYMERASES I, II, AND III SUBUNIT RPABC3"/>
    <property type="match status" value="1"/>
</dbReference>
<dbReference type="PANTHER" id="PTHR10917:SF0">
    <property type="entry name" value="DNA-DIRECTED RNA POLYMERASES I, II, AND III SUBUNIT RPABC3"/>
    <property type="match status" value="1"/>
</dbReference>
<dbReference type="Pfam" id="PF03870">
    <property type="entry name" value="RNA_pol_Rpb8"/>
    <property type="match status" value="1"/>
</dbReference>
<dbReference type="PIRSF" id="PIRSF000779">
    <property type="entry name" value="RNA_pol_Rpb8"/>
    <property type="match status" value="1"/>
</dbReference>
<dbReference type="SMART" id="SM00658">
    <property type="entry name" value="RPOL8c"/>
    <property type="match status" value="1"/>
</dbReference>
<dbReference type="SUPFAM" id="SSF50249">
    <property type="entry name" value="Nucleic acid-binding proteins"/>
    <property type="match status" value="1"/>
</dbReference>
<organism>
    <name type="scientific">Dictyostelium discoideum</name>
    <name type="common">Social amoeba</name>
    <dbReference type="NCBI Taxonomy" id="44689"/>
    <lineage>
        <taxon>Eukaryota</taxon>
        <taxon>Amoebozoa</taxon>
        <taxon>Evosea</taxon>
        <taxon>Eumycetozoa</taxon>
        <taxon>Dictyostelia</taxon>
        <taxon>Dictyosteliales</taxon>
        <taxon>Dictyosteliaceae</taxon>
        <taxon>Dictyostelium</taxon>
    </lineage>
</organism>